<gene>
    <name evidence="1" type="primary">psd</name>
    <name type="ordered locus">Saro_1366</name>
</gene>
<reference key="1">
    <citation type="submission" date="2006-01" db="EMBL/GenBank/DDBJ databases">
        <title>Complete sequence of Novosphingobium aromaticivorans DSM 12444.</title>
        <authorList>
            <consortium name="US DOE Joint Genome Institute"/>
            <person name="Copeland A."/>
            <person name="Lucas S."/>
            <person name="Lapidus A."/>
            <person name="Barry K."/>
            <person name="Detter J.C."/>
            <person name="Glavina T."/>
            <person name="Hammon N."/>
            <person name="Israni S."/>
            <person name="Pitluck S."/>
            <person name="Chain P."/>
            <person name="Malfatti S."/>
            <person name="Shin M."/>
            <person name="Vergez L."/>
            <person name="Schmutz J."/>
            <person name="Larimer F."/>
            <person name="Land M."/>
            <person name="Kyrpides N."/>
            <person name="Ivanova N."/>
            <person name="Fredrickson J."/>
            <person name="Balkwill D."/>
            <person name="Romine M.F."/>
            <person name="Richardson P."/>
        </authorList>
    </citation>
    <scope>NUCLEOTIDE SEQUENCE [LARGE SCALE GENOMIC DNA]</scope>
    <source>
        <strain>ATCC 700278 / DSM 12444 / CCUG 56034 / CIP 105152 / NBRC 16084 / F199</strain>
    </source>
</reference>
<proteinExistence type="inferred from homology"/>
<name>PSD_NOVAD</name>
<organism>
    <name type="scientific">Novosphingobium aromaticivorans (strain ATCC 700278 / DSM 12444 / CCUG 56034 / CIP 105152 / NBRC 16084 / F199)</name>
    <dbReference type="NCBI Taxonomy" id="279238"/>
    <lineage>
        <taxon>Bacteria</taxon>
        <taxon>Pseudomonadati</taxon>
        <taxon>Pseudomonadota</taxon>
        <taxon>Alphaproteobacteria</taxon>
        <taxon>Sphingomonadales</taxon>
        <taxon>Sphingomonadaceae</taxon>
        <taxon>Novosphingobium</taxon>
    </lineage>
</organism>
<protein>
    <recommendedName>
        <fullName evidence="1">Phosphatidylserine decarboxylase proenzyme</fullName>
        <ecNumber evidence="1">4.1.1.65</ecNumber>
    </recommendedName>
    <component>
        <recommendedName>
            <fullName evidence="1">Phosphatidylserine decarboxylase alpha chain</fullName>
        </recommendedName>
    </component>
    <component>
        <recommendedName>
            <fullName evidence="1">Phosphatidylserine decarboxylase beta chain</fullName>
        </recommendedName>
    </component>
</protein>
<comment type="function">
    <text evidence="1">Catalyzes the formation of phosphatidylethanolamine (PtdEtn) from phosphatidylserine (PtdSer).</text>
</comment>
<comment type="catalytic activity">
    <reaction evidence="1">
        <text>a 1,2-diacyl-sn-glycero-3-phospho-L-serine + H(+) = a 1,2-diacyl-sn-glycero-3-phosphoethanolamine + CO2</text>
        <dbReference type="Rhea" id="RHEA:20828"/>
        <dbReference type="ChEBI" id="CHEBI:15378"/>
        <dbReference type="ChEBI" id="CHEBI:16526"/>
        <dbReference type="ChEBI" id="CHEBI:57262"/>
        <dbReference type="ChEBI" id="CHEBI:64612"/>
        <dbReference type="EC" id="4.1.1.65"/>
    </reaction>
</comment>
<comment type="cofactor">
    <cofactor evidence="1">
        <name>pyruvate</name>
        <dbReference type="ChEBI" id="CHEBI:15361"/>
    </cofactor>
    <text evidence="1">Binds 1 pyruvoyl group covalently per subunit.</text>
</comment>
<comment type="pathway">
    <text evidence="1">Phospholipid metabolism; phosphatidylethanolamine biosynthesis; phosphatidylethanolamine from CDP-diacylglycerol: step 2/2.</text>
</comment>
<comment type="subunit">
    <text evidence="1">Heterodimer of a large membrane-associated beta subunit and a small pyruvoyl-containing alpha subunit.</text>
</comment>
<comment type="subcellular location">
    <subcellularLocation>
        <location evidence="1">Cell membrane</location>
        <topology evidence="1">Peripheral membrane protein</topology>
    </subcellularLocation>
</comment>
<comment type="PTM">
    <text evidence="1">Is synthesized initially as an inactive proenzyme. Formation of the active enzyme involves a self-maturation process in which the active site pyruvoyl group is generated from an internal serine residue via an autocatalytic post-translational modification. Two non-identical subunits are generated from the proenzyme in this reaction, and the pyruvate is formed at the N-terminus of the alpha chain, which is derived from the carboxyl end of the proenzyme. The post-translation cleavage follows an unusual pathway, termed non-hydrolytic serinolysis, in which the side chain hydroxyl group of the serine supplies its oxygen atom to form the C-terminus of the beta chain, while the remainder of the serine residue undergoes an oxidative deamination to produce ammonia and the pyruvoyl prosthetic group on the alpha chain.</text>
</comment>
<comment type="similarity">
    <text evidence="1">Belongs to the phosphatidylserine decarboxylase family. PSD-A subfamily.</text>
</comment>
<accession>Q2G8L3</accession>
<keyword id="KW-1003">Cell membrane</keyword>
<keyword id="KW-0210">Decarboxylase</keyword>
<keyword id="KW-0444">Lipid biosynthesis</keyword>
<keyword id="KW-0443">Lipid metabolism</keyword>
<keyword id="KW-0456">Lyase</keyword>
<keyword id="KW-0472">Membrane</keyword>
<keyword id="KW-0594">Phospholipid biosynthesis</keyword>
<keyword id="KW-1208">Phospholipid metabolism</keyword>
<keyword id="KW-0670">Pyruvate</keyword>
<keyword id="KW-1185">Reference proteome</keyword>
<keyword id="KW-0865">Zymogen</keyword>
<feature type="chain" id="PRO_0000262237" description="Phosphatidylserine decarboxylase beta chain" evidence="1">
    <location>
        <begin position="1"/>
        <end position="210"/>
    </location>
</feature>
<feature type="chain" id="PRO_0000262238" description="Phosphatidylserine decarboxylase alpha chain" evidence="1">
    <location>
        <begin position="211"/>
        <end position="252"/>
    </location>
</feature>
<feature type="active site" description="Schiff-base intermediate with substrate; via pyruvic acid" evidence="1">
    <location>
        <position position="211"/>
    </location>
</feature>
<feature type="site" description="Cleavage (non-hydrolytic); by autocatalysis" evidence="1">
    <location>
        <begin position="210"/>
        <end position="211"/>
    </location>
</feature>
<feature type="modified residue" description="Pyruvic acid (Ser); by autocatalysis" evidence="1">
    <location>
        <position position="211"/>
    </location>
</feature>
<evidence type="ECO:0000255" key="1">
    <source>
        <dbReference type="HAMAP-Rule" id="MF_00664"/>
    </source>
</evidence>
<dbReference type="EC" id="4.1.1.65" evidence="1"/>
<dbReference type="EMBL" id="CP000248">
    <property type="protein sequence ID" value="ABD25810.1"/>
    <property type="molecule type" value="Genomic_DNA"/>
</dbReference>
<dbReference type="SMR" id="Q2G8L3"/>
<dbReference type="STRING" id="279238.Saro_1366"/>
<dbReference type="KEGG" id="nar:Saro_1366"/>
<dbReference type="eggNOG" id="COG0688">
    <property type="taxonomic scope" value="Bacteria"/>
</dbReference>
<dbReference type="HOGENOM" id="CLU_072492_0_0_5"/>
<dbReference type="UniPathway" id="UPA00558">
    <property type="reaction ID" value="UER00616"/>
</dbReference>
<dbReference type="Proteomes" id="UP000009134">
    <property type="component" value="Chromosome"/>
</dbReference>
<dbReference type="GO" id="GO:0005886">
    <property type="term" value="C:plasma membrane"/>
    <property type="evidence" value="ECO:0007669"/>
    <property type="project" value="UniProtKB-SubCell"/>
</dbReference>
<dbReference type="GO" id="GO:0004609">
    <property type="term" value="F:phosphatidylserine decarboxylase activity"/>
    <property type="evidence" value="ECO:0007669"/>
    <property type="project" value="UniProtKB-UniRule"/>
</dbReference>
<dbReference type="GO" id="GO:0006646">
    <property type="term" value="P:phosphatidylethanolamine biosynthetic process"/>
    <property type="evidence" value="ECO:0007669"/>
    <property type="project" value="UniProtKB-UniRule"/>
</dbReference>
<dbReference type="HAMAP" id="MF_00664">
    <property type="entry name" value="PS_decarb_PSD_A"/>
    <property type="match status" value="1"/>
</dbReference>
<dbReference type="InterPro" id="IPR003817">
    <property type="entry name" value="PS_Dcarbxylase"/>
</dbReference>
<dbReference type="InterPro" id="IPR033175">
    <property type="entry name" value="PSD-A"/>
</dbReference>
<dbReference type="NCBIfam" id="NF003678">
    <property type="entry name" value="PRK05305.1-2"/>
    <property type="match status" value="1"/>
</dbReference>
<dbReference type="NCBIfam" id="NF003679">
    <property type="entry name" value="PRK05305.1-3"/>
    <property type="match status" value="1"/>
</dbReference>
<dbReference type="PANTHER" id="PTHR35809">
    <property type="entry name" value="ARCHAETIDYLSERINE DECARBOXYLASE PROENZYME-RELATED"/>
    <property type="match status" value="1"/>
</dbReference>
<dbReference type="PANTHER" id="PTHR35809:SF1">
    <property type="entry name" value="ARCHAETIDYLSERINE DECARBOXYLASE PROENZYME-RELATED"/>
    <property type="match status" value="1"/>
</dbReference>
<dbReference type="Pfam" id="PF02666">
    <property type="entry name" value="PS_Dcarbxylase"/>
    <property type="match status" value="1"/>
</dbReference>
<sequence>MGRMSGEILDNRGRGTAGWSWPSIHPEGRKFGLIAAVASLGAALMAWETIAWPLAFLTLGVLAFFRDPVRVTPRDDRFVVSPADGLITLIQKVPPPRELCADDGSGVRGMNDAPVTRVSIFMSVFDVHINRSPIAGTIRRVVYIPGKFLNADLDKASEENERQHFLVERADGVQIGFTQIAGLIARRIVPFVKGGDIVAVGQRVGLIRFGSRVDVYLPAGTEPKVLMGQKVIAGETVLAEIGEAPMIEGIGQ</sequence>